<accession>Q8FLN8</accession>
<evidence type="ECO:0000255" key="1">
    <source>
        <dbReference type="HAMAP-Rule" id="MF_00469"/>
    </source>
</evidence>
<gene>
    <name evidence="1" type="primary">trhO</name>
    <name type="ordered locus">CE2830</name>
</gene>
<organism>
    <name type="scientific">Corynebacterium efficiens (strain DSM 44549 / YS-314 / AJ 12310 / JCM 11189 / NBRC 100395)</name>
    <dbReference type="NCBI Taxonomy" id="196164"/>
    <lineage>
        <taxon>Bacteria</taxon>
        <taxon>Bacillati</taxon>
        <taxon>Actinomycetota</taxon>
        <taxon>Actinomycetes</taxon>
        <taxon>Mycobacteriales</taxon>
        <taxon>Corynebacteriaceae</taxon>
        <taxon>Corynebacterium</taxon>
    </lineage>
</organism>
<name>TRHO_COREF</name>
<comment type="function">
    <text evidence="1">Catalyzes oxygen-dependent 5-hydroxyuridine (ho5U) modification at position 34 in tRNAs.</text>
</comment>
<comment type="catalytic activity">
    <reaction evidence="1">
        <text>uridine(34) in tRNA + AH2 + O2 = 5-hydroxyuridine(34) in tRNA + A + H2O</text>
        <dbReference type="Rhea" id="RHEA:64224"/>
        <dbReference type="Rhea" id="RHEA-COMP:11727"/>
        <dbReference type="Rhea" id="RHEA-COMP:13381"/>
        <dbReference type="ChEBI" id="CHEBI:13193"/>
        <dbReference type="ChEBI" id="CHEBI:15377"/>
        <dbReference type="ChEBI" id="CHEBI:15379"/>
        <dbReference type="ChEBI" id="CHEBI:17499"/>
        <dbReference type="ChEBI" id="CHEBI:65315"/>
        <dbReference type="ChEBI" id="CHEBI:136877"/>
    </reaction>
</comment>
<comment type="similarity">
    <text evidence="1">Belongs to the TrhO family.</text>
</comment>
<sequence length="312" mass="35150">MSIGKILLYYAFTPLSDPKAVQLWQRDLCESLNLRGRILISEHGINGTVGGDINDCKAYIRKTREYPGFAKMEFKWSEGGAEDFPKLSVKVRDEIVAFGAPNEIKVDENGIIGGGVHLKPEEVNQLVEERGDEVVFFDGRNAMEAQIGKFRDAVVPDVNTTHDFIKEIESGKYDDLKDKPVVTYCTGGIRCEILSSLMINRGFQEVYQIDGGIVRYGEKFGNQGLWEGSLYVFDKRMHMEFGEDYKRLGHCIHCDTPTNKFEHCVNEDECRQLVLMCPDCYANVETRHCGQDDCVEIAADLAARGVDPLVTQ</sequence>
<dbReference type="EC" id="1.14.-.-" evidence="1"/>
<dbReference type="EMBL" id="BA000035">
    <property type="protein sequence ID" value="BAC19640.1"/>
    <property type="molecule type" value="Genomic_DNA"/>
</dbReference>
<dbReference type="RefSeq" id="WP_006768815.1">
    <property type="nucleotide sequence ID" value="NC_004369.1"/>
</dbReference>
<dbReference type="SMR" id="Q8FLN8"/>
<dbReference type="STRING" id="196164.gene:10743280"/>
<dbReference type="KEGG" id="cef:CE2830"/>
<dbReference type="eggNOG" id="COG1054">
    <property type="taxonomic scope" value="Bacteria"/>
</dbReference>
<dbReference type="HOGENOM" id="CLU_038878_1_0_11"/>
<dbReference type="OrthoDB" id="9778326at2"/>
<dbReference type="Proteomes" id="UP000001409">
    <property type="component" value="Chromosome"/>
</dbReference>
<dbReference type="GO" id="GO:0016705">
    <property type="term" value="F:oxidoreductase activity, acting on paired donors, with incorporation or reduction of molecular oxygen"/>
    <property type="evidence" value="ECO:0007669"/>
    <property type="project" value="UniProtKB-UniRule"/>
</dbReference>
<dbReference type="GO" id="GO:0006400">
    <property type="term" value="P:tRNA modification"/>
    <property type="evidence" value="ECO:0007669"/>
    <property type="project" value="UniProtKB-UniRule"/>
</dbReference>
<dbReference type="CDD" id="cd01518">
    <property type="entry name" value="RHOD_YceA"/>
    <property type="match status" value="1"/>
</dbReference>
<dbReference type="Gene3D" id="3.30.70.100">
    <property type="match status" value="1"/>
</dbReference>
<dbReference type="Gene3D" id="3.40.250.10">
    <property type="entry name" value="Rhodanese-like domain"/>
    <property type="match status" value="1"/>
</dbReference>
<dbReference type="HAMAP" id="MF_00469">
    <property type="entry name" value="TrhO"/>
    <property type="match status" value="1"/>
</dbReference>
<dbReference type="InterPro" id="IPR001763">
    <property type="entry name" value="Rhodanese-like_dom"/>
</dbReference>
<dbReference type="InterPro" id="IPR036873">
    <property type="entry name" value="Rhodanese-like_dom_sf"/>
</dbReference>
<dbReference type="InterPro" id="IPR022111">
    <property type="entry name" value="Rhodanese_C"/>
</dbReference>
<dbReference type="InterPro" id="IPR020936">
    <property type="entry name" value="TrhO"/>
</dbReference>
<dbReference type="InterPro" id="IPR040503">
    <property type="entry name" value="TRHO_N"/>
</dbReference>
<dbReference type="NCBIfam" id="NF001134">
    <property type="entry name" value="PRK00142.1-2"/>
    <property type="match status" value="1"/>
</dbReference>
<dbReference type="PANTHER" id="PTHR43268">
    <property type="entry name" value="THIOSULFATE SULFURTRANSFERASE/RHODANESE-LIKE DOMAIN-CONTAINING PROTEIN 2"/>
    <property type="match status" value="1"/>
</dbReference>
<dbReference type="PANTHER" id="PTHR43268:SF6">
    <property type="entry name" value="THIOSULFATE SULFURTRANSFERASE_RHODANESE-LIKE DOMAIN-CONTAINING PROTEIN 2"/>
    <property type="match status" value="1"/>
</dbReference>
<dbReference type="Pfam" id="PF00581">
    <property type="entry name" value="Rhodanese"/>
    <property type="match status" value="1"/>
</dbReference>
<dbReference type="Pfam" id="PF12368">
    <property type="entry name" value="Rhodanese_C"/>
    <property type="match status" value="1"/>
</dbReference>
<dbReference type="Pfam" id="PF17773">
    <property type="entry name" value="UPF0176_N"/>
    <property type="match status" value="1"/>
</dbReference>
<dbReference type="SMART" id="SM00450">
    <property type="entry name" value="RHOD"/>
    <property type="match status" value="1"/>
</dbReference>
<dbReference type="SUPFAM" id="SSF52821">
    <property type="entry name" value="Rhodanese/Cell cycle control phosphatase"/>
    <property type="match status" value="1"/>
</dbReference>
<dbReference type="PROSITE" id="PS50206">
    <property type="entry name" value="RHODANESE_3"/>
    <property type="match status" value="1"/>
</dbReference>
<proteinExistence type="inferred from homology"/>
<protein>
    <recommendedName>
        <fullName evidence="1">tRNA uridine(34) hydroxylase</fullName>
        <ecNumber evidence="1">1.14.-.-</ecNumber>
    </recommendedName>
    <alternativeName>
        <fullName evidence="1">tRNA hydroxylation protein O</fullName>
    </alternativeName>
</protein>
<keyword id="KW-0560">Oxidoreductase</keyword>
<keyword id="KW-1185">Reference proteome</keyword>
<keyword id="KW-0819">tRNA processing</keyword>
<reference key="1">
    <citation type="journal article" date="2003" name="Genome Res.">
        <title>Comparative complete genome sequence analysis of the amino acid replacements responsible for the thermostability of Corynebacterium efficiens.</title>
        <authorList>
            <person name="Nishio Y."/>
            <person name="Nakamura Y."/>
            <person name="Kawarabayasi Y."/>
            <person name="Usuda Y."/>
            <person name="Kimura E."/>
            <person name="Sugimoto S."/>
            <person name="Matsui K."/>
            <person name="Yamagishi A."/>
            <person name="Kikuchi H."/>
            <person name="Ikeo K."/>
            <person name="Gojobori T."/>
        </authorList>
    </citation>
    <scope>NUCLEOTIDE SEQUENCE [LARGE SCALE GENOMIC DNA]</scope>
    <source>
        <strain>DSM 44549 / YS-314 / AJ 12310 / JCM 11189 / NBRC 100395</strain>
    </source>
</reference>
<feature type="chain" id="PRO_0000161467" description="tRNA uridine(34) hydroxylase">
    <location>
        <begin position="1"/>
        <end position="312"/>
    </location>
</feature>
<feature type="domain" description="Rhodanese" evidence="1">
    <location>
        <begin position="130"/>
        <end position="225"/>
    </location>
</feature>
<feature type="active site" description="Cysteine persulfide intermediate" evidence="1">
    <location>
        <position position="185"/>
    </location>
</feature>